<evidence type="ECO:0000255" key="1">
    <source>
        <dbReference type="HAMAP-Rule" id="MF_00563"/>
    </source>
</evidence>
<sequence>MVAAPTTATELKLGTDCVIADINLAAFGRKELDIAETEMPGLMALRAKYGNEKPLKGARIAGSLHMTIQTAVLIETLEELGADVRWASCNIFSTQDHAAAAIAANGTPVFAVKGETLEEYWAYTHRILEWSDGGAPNMILDDGGDATGLVILGTKAEQDITVLDNPSNEEETFLFASIKKKLAEDSSFYSRTKAAIQGVTEETTTGVARLYKMQKSGELPFPAINVNDSVTKSKFDNLYGCRESLVDSIKRATDVMVAGKQALVVGYGDVGKGSAQSLRGLGATVCIAEVDPICALQAAMEGYRVVRLDDVVDQMDIFVTATGNYQVIRNEHLVKMKDEAIVCNIGHFDNEIDVASLKDYKWDNIKPQVDHITLPSGNKIILLAEGRLVNLGCATGHPSFVMSNSFTNQVLAQIELFTKANEYGKEVYVLPKHLDEMVARLHLSKIGANLTELSKDQADYINVPVEGPYKPDHYRY</sequence>
<name>SAHH_SYNS9</name>
<organism>
    <name type="scientific">Synechococcus sp. (strain CC9902)</name>
    <dbReference type="NCBI Taxonomy" id="316279"/>
    <lineage>
        <taxon>Bacteria</taxon>
        <taxon>Bacillati</taxon>
        <taxon>Cyanobacteriota</taxon>
        <taxon>Cyanophyceae</taxon>
        <taxon>Synechococcales</taxon>
        <taxon>Synechococcaceae</taxon>
        <taxon>Synechococcus</taxon>
    </lineage>
</organism>
<feature type="chain" id="PRO_1000024762" description="Adenosylhomocysteinase">
    <location>
        <begin position="1"/>
        <end position="476"/>
    </location>
</feature>
<feature type="binding site" evidence="1">
    <location>
        <position position="67"/>
    </location>
    <ligand>
        <name>substrate</name>
    </ligand>
</feature>
<feature type="binding site" evidence="1">
    <location>
        <position position="142"/>
    </location>
    <ligand>
        <name>substrate</name>
    </ligand>
</feature>
<feature type="binding site" evidence="1">
    <location>
        <position position="202"/>
    </location>
    <ligand>
        <name>substrate</name>
    </ligand>
</feature>
<feature type="binding site" evidence="1">
    <location>
        <begin position="203"/>
        <end position="205"/>
    </location>
    <ligand>
        <name>NAD(+)</name>
        <dbReference type="ChEBI" id="CHEBI:57540"/>
    </ligand>
</feature>
<feature type="binding site" evidence="1">
    <location>
        <position position="232"/>
    </location>
    <ligand>
        <name>substrate</name>
    </ligand>
</feature>
<feature type="binding site" evidence="1">
    <location>
        <position position="236"/>
    </location>
    <ligand>
        <name>substrate</name>
    </ligand>
</feature>
<feature type="binding site" evidence="1">
    <location>
        <position position="237"/>
    </location>
    <ligand>
        <name>NAD(+)</name>
        <dbReference type="ChEBI" id="CHEBI:57540"/>
    </ligand>
</feature>
<feature type="binding site" evidence="1">
    <location>
        <begin position="266"/>
        <end position="271"/>
    </location>
    <ligand>
        <name>NAD(+)</name>
        <dbReference type="ChEBI" id="CHEBI:57540"/>
    </ligand>
</feature>
<feature type="binding site" evidence="1">
    <location>
        <position position="289"/>
    </location>
    <ligand>
        <name>NAD(+)</name>
        <dbReference type="ChEBI" id="CHEBI:57540"/>
    </ligand>
</feature>
<feature type="binding site" evidence="1">
    <location>
        <position position="324"/>
    </location>
    <ligand>
        <name>NAD(+)</name>
        <dbReference type="ChEBI" id="CHEBI:57540"/>
    </ligand>
</feature>
<feature type="binding site" evidence="1">
    <location>
        <begin position="345"/>
        <end position="347"/>
    </location>
    <ligand>
        <name>NAD(+)</name>
        <dbReference type="ChEBI" id="CHEBI:57540"/>
    </ligand>
</feature>
<feature type="binding site" evidence="1">
    <location>
        <position position="390"/>
    </location>
    <ligand>
        <name>NAD(+)</name>
        <dbReference type="ChEBI" id="CHEBI:57540"/>
    </ligand>
</feature>
<dbReference type="EC" id="3.13.2.1" evidence="1"/>
<dbReference type="EMBL" id="CP000097">
    <property type="protein sequence ID" value="ABB25121.1"/>
    <property type="molecule type" value="Genomic_DNA"/>
</dbReference>
<dbReference type="RefSeq" id="WP_011358988.1">
    <property type="nucleotide sequence ID" value="NC_007513.1"/>
</dbReference>
<dbReference type="SMR" id="Q3B0K7"/>
<dbReference type="STRING" id="316279.Syncc9902_0146"/>
<dbReference type="KEGG" id="sye:Syncc9902_0146"/>
<dbReference type="eggNOG" id="COG0499">
    <property type="taxonomic scope" value="Bacteria"/>
</dbReference>
<dbReference type="HOGENOM" id="CLU_025194_2_1_3"/>
<dbReference type="OrthoDB" id="9802717at2"/>
<dbReference type="UniPathway" id="UPA00314">
    <property type="reaction ID" value="UER00076"/>
</dbReference>
<dbReference type="Proteomes" id="UP000002712">
    <property type="component" value="Chromosome"/>
</dbReference>
<dbReference type="GO" id="GO:0005829">
    <property type="term" value="C:cytosol"/>
    <property type="evidence" value="ECO:0007669"/>
    <property type="project" value="TreeGrafter"/>
</dbReference>
<dbReference type="GO" id="GO:0004013">
    <property type="term" value="F:adenosylhomocysteinase activity"/>
    <property type="evidence" value="ECO:0007669"/>
    <property type="project" value="UniProtKB-UniRule"/>
</dbReference>
<dbReference type="GO" id="GO:0071269">
    <property type="term" value="P:L-homocysteine biosynthetic process"/>
    <property type="evidence" value="ECO:0007669"/>
    <property type="project" value="UniProtKB-UniRule"/>
</dbReference>
<dbReference type="GO" id="GO:0006730">
    <property type="term" value="P:one-carbon metabolic process"/>
    <property type="evidence" value="ECO:0007669"/>
    <property type="project" value="UniProtKB-KW"/>
</dbReference>
<dbReference type="GO" id="GO:0033353">
    <property type="term" value="P:S-adenosylmethionine cycle"/>
    <property type="evidence" value="ECO:0007669"/>
    <property type="project" value="TreeGrafter"/>
</dbReference>
<dbReference type="CDD" id="cd00401">
    <property type="entry name" value="SAHH"/>
    <property type="match status" value="1"/>
</dbReference>
<dbReference type="FunFam" id="3.40.50.720:FF:000004">
    <property type="entry name" value="Adenosylhomocysteinase"/>
    <property type="match status" value="1"/>
</dbReference>
<dbReference type="Gene3D" id="3.40.50.1480">
    <property type="entry name" value="Adenosylhomocysteinase-like"/>
    <property type="match status" value="1"/>
</dbReference>
<dbReference type="Gene3D" id="3.40.50.720">
    <property type="entry name" value="NAD(P)-binding Rossmann-like Domain"/>
    <property type="match status" value="1"/>
</dbReference>
<dbReference type="HAMAP" id="MF_00563">
    <property type="entry name" value="AdoHcyase"/>
    <property type="match status" value="1"/>
</dbReference>
<dbReference type="InterPro" id="IPR042172">
    <property type="entry name" value="Adenosylhomocyst_ase-like_sf"/>
</dbReference>
<dbReference type="InterPro" id="IPR000043">
    <property type="entry name" value="Adenosylhomocysteinase-like"/>
</dbReference>
<dbReference type="InterPro" id="IPR015878">
    <property type="entry name" value="Ado_hCys_hydrolase_NAD-bd"/>
</dbReference>
<dbReference type="InterPro" id="IPR036291">
    <property type="entry name" value="NAD(P)-bd_dom_sf"/>
</dbReference>
<dbReference type="InterPro" id="IPR020082">
    <property type="entry name" value="S-Ado-L-homoCys_hydrolase_CS"/>
</dbReference>
<dbReference type="NCBIfam" id="TIGR00936">
    <property type="entry name" value="ahcY"/>
    <property type="match status" value="1"/>
</dbReference>
<dbReference type="NCBIfam" id="NF004005">
    <property type="entry name" value="PRK05476.2-3"/>
    <property type="match status" value="1"/>
</dbReference>
<dbReference type="PANTHER" id="PTHR23420">
    <property type="entry name" value="ADENOSYLHOMOCYSTEINASE"/>
    <property type="match status" value="1"/>
</dbReference>
<dbReference type="PANTHER" id="PTHR23420:SF0">
    <property type="entry name" value="ADENOSYLHOMOCYSTEINASE"/>
    <property type="match status" value="1"/>
</dbReference>
<dbReference type="Pfam" id="PF05221">
    <property type="entry name" value="AdoHcyase"/>
    <property type="match status" value="1"/>
</dbReference>
<dbReference type="Pfam" id="PF00670">
    <property type="entry name" value="AdoHcyase_NAD"/>
    <property type="match status" value="1"/>
</dbReference>
<dbReference type="PIRSF" id="PIRSF001109">
    <property type="entry name" value="Ad_hcy_hydrolase"/>
    <property type="match status" value="1"/>
</dbReference>
<dbReference type="SMART" id="SM00996">
    <property type="entry name" value="AdoHcyase"/>
    <property type="match status" value="1"/>
</dbReference>
<dbReference type="SMART" id="SM00997">
    <property type="entry name" value="AdoHcyase_NAD"/>
    <property type="match status" value="1"/>
</dbReference>
<dbReference type="SUPFAM" id="SSF52283">
    <property type="entry name" value="Formate/glycerate dehydrogenase catalytic domain-like"/>
    <property type="match status" value="1"/>
</dbReference>
<dbReference type="SUPFAM" id="SSF51735">
    <property type="entry name" value="NAD(P)-binding Rossmann-fold domains"/>
    <property type="match status" value="1"/>
</dbReference>
<dbReference type="PROSITE" id="PS00738">
    <property type="entry name" value="ADOHCYASE_1"/>
    <property type="match status" value="1"/>
</dbReference>
<dbReference type="PROSITE" id="PS00739">
    <property type="entry name" value="ADOHCYASE_2"/>
    <property type="match status" value="1"/>
</dbReference>
<comment type="function">
    <text evidence="1">May play a key role in the regulation of the intracellular concentration of adenosylhomocysteine.</text>
</comment>
<comment type="catalytic activity">
    <reaction evidence="1">
        <text>S-adenosyl-L-homocysteine + H2O = L-homocysteine + adenosine</text>
        <dbReference type="Rhea" id="RHEA:21708"/>
        <dbReference type="ChEBI" id="CHEBI:15377"/>
        <dbReference type="ChEBI" id="CHEBI:16335"/>
        <dbReference type="ChEBI" id="CHEBI:57856"/>
        <dbReference type="ChEBI" id="CHEBI:58199"/>
        <dbReference type="EC" id="3.13.2.1"/>
    </reaction>
</comment>
<comment type="cofactor">
    <cofactor evidence="1">
        <name>NAD(+)</name>
        <dbReference type="ChEBI" id="CHEBI:57540"/>
    </cofactor>
    <text evidence="1">Binds 1 NAD(+) per subunit.</text>
</comment>
<comment type="pathway">
    <text evidence="1">Amino-acid biosynthesis; L-homocysteine biosynthesis; L-homocysteine from S-adenosyl-L-homocysteine: step 1/1.</text>
</comment>
<comment type="subcellular location">
    <subcellularLocation>
        <location evidence="1">Cytoplasm</location>
    </subcellularLocation>
</comment>
<comment type="similarity">
    <text evidence="1">Belongs to the adenosylhomocysteinase family.</text>
</comment>
<accession>Q3B0K7</accession>
<gene>
    <name evidence="1" type="primary">ahcY</name>
    <name type="ordered locus">Syncc9902_0146</name>
</gene>
<proteinExistence type="inferred from homology"/>
<reference key="1">
    <citation type="submission" date="2005-08" db="EMBL/GenBank/DDBJ databases">
        <title>Complete sequence of Synechococcus sp. CC9902.</title>
        <authorList>
            <person name="Copeland A."/>
            <person name="Lucas S."/>
            <person name="Lapidus A."/>
            <person name="Barry K."/>
            <person name="Detter J.C."/>
            <person name="Glavina T."/>
            <person name="Hammon N."/>
            <person name="Israni S."/>
            <person name="Pitluck S."/>
            <person name="Martinez M."/>
            <person name="Schmutz J."/>
            <person name="Larimer F."/>
            <person name="Land M."/>
            <person name="Kyrpides N."/>
            <person name="Ivanova N."/>
            <person name="Richardson P."/>
        </authorList>
    </citation>
    <scope>NUCLEOTIDE SEQUENCE [LARGE SCALE GENOMIC DNA]</scope>
    <source>
        <strain>CC9902</strain>
    </source>
</reference>
<keyword id="KW-0963">Cytoplasm</keyword>
<keyword id="KW-0378">Hydrolase</keyword>
<keyword id="KW-0520">NAD</keyword>
<keyword id="KW-0554">One-carbon metabolism</keyword>
<keyword id="KW-1185">Reference proteome</keyword>
<protein>
    <recommendedName>
        <fullName evidence="1">Adenosylhomocysteinase</fullName>
        <ecNumber evidence="1">3.13.2.1</ecNumber>
    </recommendedName>
    <alternativeName>
        <fullName evidence="1">S-adenosyl-L-homocysteine hydrolase</fullName>
        <shortName evidence="1">AdoHcyase</shortName>
    </alternativeName>
</protein>